<gene>
    <name evidence="1" type="primary">fmt</name>
    <name type="ordered locus">P9211_09241</name>
</gene>
<evidence type="ECO:0000255" key="1">
    <source>
        <dbReference type="HAMAP-Rule" id="MF_00182"/>
    </source>
</evidence>
<reference key="1">
    <citation type="journal article" date="2007" name="PLoS Genet.">
        <title>Patterns and implications of gene gain and loss in the evolution of Prochlorococcus.</title>
        <authorList>
            <person name="Kettler G.C."/>
            <person name="Martiny A.C."/>
            <person name="Huang K."/>
            <person name="Zucker J."/>
            <person name="Coleman M.L."/>
            <person name="Rodrigue S."/>
            <person name="Chen F."/>
            <person name="Lapidus A."/>
            <person name="Ferriera S."/>
            <person name="Johnson J."/>
            <person name="Steglich C."/>
            <person name="Church G.M."/>
            <person name="Richardson P."/>
            <person name="Chisholm S.W."/>
        </authorList>
    </citation>
    <scope>NUCLEOTIDE SEQUENCE [LARGE SCALE GENOMIC DNA]</scope>
    <source>
        <strain>MIT 9211</strain>
    </source>
</reference>
<organism>
    <name type="scientific">Prochlorococcus marinus (strain MIT 9211)</name>
    <dbReference type="NCBI Taxonomy" id="93059"/>
    <lineage>
        <taxon>Bacteria</taxon>
        <taxon>Bacillati</taxon>
        <taxon>Cyanobacteriota</taxon>
        <taxon>Cyanophyceae</taxon>
        <taxon>Synechococcales</taxon>
        <taxon>Prochlorococcaceae</taxon>
        <taxon>Prochlorococcus</taxon>
    </lineage>
</organism>
<dbReference type="EC" id="2.1.2.9" evidence="1"/>
<dbReference type="EMBL" id="CP000878">
    <property type="protein sequence ID" value="ABX08855.1"/>
    <property type="molecule type" value="Genomic_DNA"/>
</dbReference>
<dbReference type="RefSeq" id="WP_012195476.1">
    <property type="nucleotide sequence ID" value="NC_009976.1"/>
</dbReference>
<dbReference type="SMR" id="A9BAJ3"/>
<dbReference type="STRING" id="93059.P9211_09241"/>
<dbReference type="KEGG" id="pmj:P9211_09241"/>
<dbReference type="eggNOG" id="COG0223">
    <property type="taxonomic scope" value="Bacteria"/>
</dbReference>
<dbReference type="HOGENOM" id="CLU_033347_1_1_3"/>
<dbReference type="OrthoDB" id="9802815at2"/>
<dbReference type="Proteomes" id="UP000000788">
    <property type="component" value="Chromosome"/>
</dbReference>
<dbReference type="GO" id="GO:0005829">
    <property type="term" value="C:cytosol"/>
    <property type="evidence" value="ECO:0007669"/>
    <property type="project" value="TreeGrafter"/>
</dbReference>
<dbReference type="GO" id="GO:0004479">
    <property type="term" value="F:methionyl-tRNA formyltransferase activity"/>
    <property type="evidence" value="ECO:0007669"/>
    <property type="project" value="UniProtKB-UniRule"/>
</dbReference>
<dbReference type="CDD" id="cd08646">
    <property type="entry name" value="FMT_core_Met-tRNA-FMT_N"/>
    <property type="match status" value="1"/>
</dbReference>
<dbReference type="CDD" id="cd08704">
    <property type="entry name" value="Met_tRNA_FMT_C"/>
    <property type="match status" value="1"/>
</dbReference>
<dbReference type="Gene3D" id="3.40.50.12230">
    <property type="match status" value="1"/>
</dbReference>
<dbReference type="HAMAP" id="MF_00182">
    <property type="entry name" value="Formyl_trans"/>
    <property type="match status" value="1"/>
</dbReference>
<dbReference type="InterPro" id="IPR005794">
    <property type="entry name" value="Fmt"/>
</dbReference>
<dbReference type="InterPro" id="IPR005793">
    <property type="entry name" value="Formyl_trans_C"/>
</dbReference>
<dbReference type="InterPro" id="IPR002376">
    <property type="entry name" value="Formyl_transf_N"/>
</dbReference>
<dbReference type="InterPro" id="IPR036477">
    <property type="entry name" value="Formyl_transf_N_sf"/>
</dbReference>
<dbReference type="InterPro" id="IPR011034">
    <property type="entry name" value="Formyl_transferase-like_C_sf"/>
</dbReference>
<dbReference type="InterPro" id="IPR001555">
    <property type="entry name" value="GART_AS"/>
</dbReference>
<dbReference type="InterPro" id="IPR044135">
    <property type="entry name" value="Met-tRNA-FMT_C"/>
</dbReference>
<dbReference type="InterPro" id="IPR041711">
    <property type="entry name" value="Met-tRNA-FMT_N"/>
</dbReference>
<dbReference type="NCBIfam" id="TIGR00460">
    <property type="entry name" value="fmt"/>
    <property type="match status" value="1"/>
</dbReference>
<dbReference type="PANTHER" id="PTHR11138">
    <property type="entry name" value="METHIONYL-TRNA FORMYLTRANSFERASE"/>
    <property type="match status" value="1"/>
</dbReference>
<dbReference type="PANTHER" id="PTHR11138:SF5">
    <property type="entry name" value="METHIONYL-TRNA FORMYLTRANSFERASE, MITOCHONDRIAL"/>
    <property type="match status" value="1"/>
</dbReference>
<dbReference type="Pfam" id="PF02911">
    <property type="entry name" value="Formyl_trans_C"/>
    <property type="match status" value="1"/>
</dbReference>
<dbReference type="Pfam" id="PF00551">
    <property type="entry name" value="Formyl_trans_N"/>
    <property type="match status" value="1"/>
</dbReference>
<dbReference type="SUPFAM" id="SSF50486">
    <property type="entry name" value="FMT C-terminal domain-like"/>
    <property type="match status" value="1"/>
</dbReference>
<dbReference type="SUPFAM" id="SSF53328">
    <property type="entry name" value="Formyltransferase"/>
    <property type="match status" value="1"/>
</dbReference>
<dbReference type="PROSITE" id="PS00373">
    <property type="entry name" value="GART"/>
    <property type="match status" value="1"/>
</dbReference>
<feature type="chain" id="PRO_1000098428" description="Methionyl-tRNA formyltransferase">
    <location>
        <begin position="1"/>
        <end position="339"/>
    </location>
</feature>
<feature type="binding site" evidence="1">
    <location>
        <begin position="110"/>
        <end position="113"/>
    </location>
    <ligand>
        <name>(6S)-5,6,7,8-tetrahydrofolate</name>
        <dbReference type="ChEBI" id="CHEBI:57453"/>
    </ligand>
</feature>
<keyword id="KW-0648">Protein biosynthesis</keyword>
<keyword id="KW-1185">Reference proteome</keyword>
<keyword id="KW-0808">Transferase</keyword>
<proteinExistence type="inferred from homology"/>
<protein>
    <recommendedName>
        <fullName evidence="1">Methionyl-tRNA formyltransferase</fullName>
        <ecNumber evidence="1">2.1.2.9</ecNumber>
    </recommendedName>
</protein>
<name>FMT_PROM4</name>
<accession>A9BAJ3</accession>
<sequence length="339" mass="37882">MKIVFWGTPEFSVPILEALINSDHDVVGVVTQPDRRRSRGNKLIHSPVKTVALENNIPVLTPQNIRQESLIQQKIINLKADLNLVVAFGQILPLLILDSPPLGSWNIHASLLPRWRGAAPIQRAILEGDILTGICIMLMEEGLDTGPILLQKEFPIDVLRNSYQISSDLSSLSATTIIEALELIRTSSHFTKNLVEIYPKLIKQDVVNCDPIYAKRLTKKEFQIDWKRLSEEIHRTIMGLYPAAYTSLNGKRIKLHNSIPLTPSFSTYISNNYDSYIIDYISTSSYPGEILAVIPKLGFIVGTASYPILILNGQMEGRNSVSADILAKQIDLSIGIRFD</sequence>
<comment type="function">
    <text evidence="1">Attaches a formyl group to the free amino group of methionyl-tRNA(fMet). The formyl group appears to play a dual role in the initiator identity of N-formylmethionyl-tRNA by promoting its recognition by IF2 and preventing the misappropriation of this tRNA by the elongation apparatus.</text>
</comment>
<comment type="catalytic activity">
    <reaction evidence="1">
        <text>L-methionyl-tRNA(fMet) + (6R)-10-formyltetrahydrofolate = N-formyl-L-methionyl-tRNA(fMet) + (6S)-5,6,7,8-tetrahydrofolate + H(+)</text>
        <dbReference type="Rhea" id="RHEA:24380"/>
        <dbReference type="Rhea" id="RHEA-COMP:9952"/>
        <dbReference type="Rhea" id="RHEA-COMP:9953"/>
        <dbReference type="ChEBI" id="CHEBI:15378"/>
        <dbReference type="ChEBI" id="CHEBI:57453"/>
        <dbReference type="ChEBI" id="CHEBI:78530"/>
        <dbReference type="ChEBI" id="CHEBI:78844"/>
        <dbReference type="ChEBI" id="CHEBI:195366"/>
        <dbReference type="EC" id="2.1.2.9"/>
    </reaction>
</comment>
<comment type="similarity">
    <text evidence="1">Belongs to the Fmt family.</text>
</comment>